<name>LUXE_VIBHA</name>
<comment type="function">
    <text>Acyl-protein synthetase activates tetradecanoic acid. It is a component of the fatty acid reductase complex responsible for converting tetradecanoic acid to the aldehyde which serves as substrate in the luciferase-catalyzed reaction.</text>
</comment>
<comment type="catalytic activity">
    <reaction>
        <text>a long-chain fatty acid + L-cysteinyl-[protein] + ATP = an S-(long-chain fatty acyl)-L-cysteinyl-[protein] + AMP + diphosphate</text>
        <dbReference type="Rhea" id="RHEA:20101"/>
        <dbReference type="Rhea" id="RHEA-COMP:10131"/>
        <dbReference type="Rhea" id="RHEA-COMP:12762"/>
        <dbReference type="ChEBI" id="CHEBI:29950"/>
        <dbReference type="ChEBI" id="CHEBI:30616"/>
        <dbReference type="ChEBI" id="CHEBI:33019"/>
        <dbReference type="ChEBI" id="CHEBI:57560"/>
        <dbReference type="ChEBI" id="CHEBI:133479"/>
        <dbReference type="ChEBI" id="CHEBI:456215"/>
        <dbReference type="EC" id="6.2.1.19"/>
    </reaction>
</comment>
<comment type="pathway">
    <text>Lipid metabolism; fatty acid reduction for biolumincescence.</text>
</comment>
<comment type="similarity">
    <text evidence="1">Belongs to the LuxE family.</text>
</comment>
<comment type="sequence caution" evidence="1">
    <conflict type="erroneous initiation">
        <sequence resource="EMBL-CDS" id="AAA88687"/>
    </conflict>
</comment>
<reference key="1">
    <citation type="journal article" date="1989" name="Biochem. Biophys. Res. Commun.">
        <title>The nucleotide sequence of the luxE gene of Vibrio harveyi and a comparison of the amino acid sequences of the acyl-protein synthetases from V. harveyi and V. fischeri.</title>
        <authorList>
            <person name="Johnston T.C."/>
            <person name="Hruska K.S."/>
            <person name="Adams L.F."/>
        </authorList>
    </citation>
    <scope>NUCLEOTIDE SEQUENCE [GENOMIC DNA]</scope>
</reference>
<reference key="2">
    <citation type="journal article" date="1990" name="J. Biol. Chem.">
        <title>Delineation of the transcriptional boundaries of the lux operon of Vibrio harveyi demonstrates the presence of two new lux genes.</title>
        <authorList>
            <person name="Swartzman E."/>
            <person name="Miyamoto C."/>
            <person name="Graham A."/>
            <person name="Meighen E."/>
        </authorList>
    </citation>
    <scope>NUCLEOTIDE SEQUENCE [GENOMIC DNA] OF 370-378</scope>
</reference>
<reference key="3">
    <citation type="journal article" date="1986" name="J. Biol. Chem.">
        <title>Nucleotide sequence of the luxB gene of Vibrio harveyi and the complete amino acid sequence of the beta subunit of bacterial luciferase.</title>
        <authorList>
            <person name="Johnston T.C."/>
            <person name="Thompson R.B."/>
            <person name="Baldwin T.O."/>
        </authorList>
    </citation>
    <scope>NUCLEOTIDE SEQUENCE [GENOMIC DNA] OF 1-94</scope>
</reference>
<dbReference type="EC" id="6.2.1.19"/>
<dbReference type="EMBL" id="M28815">
    <property type="protein sequence ID" value="AAA27531.1"/>
    <property type="molecule type" value="Genomic_DNA"/>
</dbReference>
<dbReference type="EMBL" id="M27139">
    <property type="status" value="NOT_ANNOTATED_CDS"/>
    <property type="molecule type" value="Genomic_DNA"/>
</dbReference>
<dbReference type="EMBL" id="M10961">
    <property type="protein sequence ID" value="AAA88687.1"/>
    <property type="status" value="ALT_INIT"/>
    <property type="molecule type" value="Genomic_DNA"/>
</dbReference>
<dbReference type="PIR" id="A32916">
    <property type="entry name" value="A32916"/>
</dbReference>
<dbReference type="SMR" id="P14286"/>
<dbReference type="UniPathway" id="UPA00569"/>
<dbReference type="GO" id="GO:0005524">
    <property type="term" value="F:ATP binding"/>
    <property type="evidence" value="ECO:0007669"/>
    <property type="project" value="UniProtKB-KW"/>
</dbReference>
<dbReference type="GO" id="GO:0047474">
    <property type="term" value="F:long-chain fatty acid--protein ligase activity"/>
    <property type="evidence" value="ECO:0007669"/>
    <property type="project" value="UniProtKB-EC"/>
</dbReference>
<dbReference type="GO" id="GO:0008218">
    <property type="term" value="P:bioluminescence"/>
    <property type="evidence" value="ECO:0007669"/>
    <property type="project" value="UniProtKB-KW"/>
</dbReference>
<dbReference type="Gene3D" id="3.40.50.12780">
    <property type="entry name" value="N-terminal domain of ligase-like"/>
    <property type="match status" value="1"/>
</dbReference>
<dbReference type="InterPro" id="IPR042099">
    <property type="entry name" value="ANL_N_sf"/>
</dbReference>
<dbReference type="InterPro" id="IPR007534">
    <property type="entry name" value="LuxE"/>
</dbReference>
<dbReference type="InterPro" id="IPR016671">
    <property type="entry name" value="LuxE_bac"/>
</dbReference>
<dbReference type="Pfam" id="PF04443">
    <property type="entry name" value="LuxE"/>
    <property type="match status" value="1"/>
</dbReference>
<dbReference type="PIRSF" id="PIRSF016580">
    <property type="entry name" value="Acyl-protein_synthetase_LuxE"/>
    <property type="match status" value="1"/>
</dbReference>
<gene>
    <name type="primary">luxE</name>
</gene>
<keyword id="KW-0067">ATP-binding</keyword>
<keyword id="KW-0436">Ligase</keyword>
<keyword id="KW-0455">Luminescence</keyword>
<keyword id="KW-0547">Nucleotide-binding</keyword>
<feature type="chain" id="PRO_0000208066" description="Long-chain-fatty-acid--luciferin-component ligase">
    <location>
        <begin position="1"/>
        <end position="378"/>
    </location>
</feature>
<organism>
    <name type="scientific">Vibrio harveyi</name>
    <name type="common">Beneckea harveyi</name>
    <dbReference type="NCBI Taxonomy" id="669"/>
    <lineage>
        <taxon>Bacteria</taxon>
        <taxon>Pseudomonadati</taxon>
        <taxon>Pseudomonadota</taxon>
        <taxon>Gammaproteobacteria</taxon>
        <taxon>Vibrionales</taxon>
        <taxon>Vibrionaceae</taxon>
        <taxon>Vibrio</taxon>
    </lineage>
</organism>
<accession>P14286</accession>
<accession>Q56697</accession>
<protein>
    <recommendedName>
        <fullName>Long-chain-fatty-acid--luciferin-component ligase</fullName>
        <ecNumber>6.2.1.19</ecNumber>
    </recommendedName>
    <alternativeName>
        <fullName>Acyl-protein synthetase</fullName>
    </alternativeName>
</protein>
<sequence>MDVLSAVKQENIAASTEIDDLIFMGTPQQWSLQEQKQLTSRLVKGAYQYHYHNNDDYRQFCERLGVGEVVEDLNDIPVFPTSIFKLKTLLTLDDDEVENRFTSSGTSGIKSIVARDRLSIERLLGSVNFGMNYVGDWFDHQMELVNLGPDRFNANNIWFKYVMSLVELLYPTAFTVTEDEIDFEATLANMNRIKQSGKTICLIGPPYFIYLLCCFMREQGQTFNGGRDLYIITGGGWKKHQDQSLDRDEFNQLLCETFTLESPEQIRDTFNQEELNTCFFEDTEHKNGVPPWVFARALDPKTLKPLPHGQSGLMSYMDASAVSYPCFLVTDDIGIVREEEGDRPGTTVEIVRRVKTRGMKGCALSMSQAFTAKNDGGN</sequence>
<evidence type="ECO:0000305" key="1"/>
<proteinExistence type="inferred from homology"/>